<proteinExistence type="inferred from homology"/>
<comment type="function">
    <text evidence="1">Binds 23S rRNA and is also seen to make contacts with the A and possibly P site tRNAs.</text>
</comment>
<comment type="subunit">
    <text evidence="1">Part of the 50S ribosomal subunit.</text>
</comment>
<comment type="similarity">
    <text evidence="1">Belongs to the universal ribosomal protein uL16 family.</text>
</comment>
<sequence length="144" mass="16206">MLLPKRVKYRREHRGKMRGRAKGGTEVHFGEYGIQALEASWITNRQIEAARIAMTRYMKRGGKVWIKIFPSKPYTAKPLEVRMGSGKGAPEGWVAVVKPGKVLFEISGVSEEVAREALRLASHKLPIKTKFVKREEIGGESNES</sequence>
<gene>
    <name evidence="1" type="primary">rplP</name>
    <name type="ordered locus">RBAM_001480</name>
</gene>
<protein>
    <recommendedName>
        <fullName evidence="1">Large ribosomal subunit protein uL16</fullName>
    </recommendedName>
    <alternativeName>
        <fullName evidence="2">50S ribosomal protein L16</fullName>
    </alternativeName>
</protein>
<keyword id="KW-0687">Ribonucleoprotein</keyword>
<keyword id="KW-0689">Ribosomal protein</keyword>
<keyword id="KW-0694">RNA-binding</keyword>
<keyword id="KW-0699">rRNA-binding</keyword>
<keyword id="KW-0820">tRNA-binding</keyword>
<dbReference type="EMBL" id="CP000560">
    <property type="protein sequence ID" value="ABS72571.1"/>
    <property type="molecule type" value="Genomic_DNA"/>
</dbReference>
<dbReference type="RefSeq" id="WP_003156478.1">
    <property type="nucleotide sequence ID" value="NC_009725.2"/>
</dbReference>
<dbReference type="SMR" id="A7Z0P5"/>
<dbReference type="GeneID" id="93079287"/>
<dbReference type="KEGG" id="bay:RBAM_001480"/>
<dbReference type="HOGENOM" id="CLU_078858_2_1_9"/>
<dbReference type="Proteomes" id="UP000001120">
    <property type="component" value="Chromosome"/>
</dbReference>
<dbReference type="GO" id="GO:0022625">
    <property type="term" value="C:cytosolic large ribosomal subunit"/>
    <property type="evidence" value="ECO:0007669"/>
    <property type="project" value="TreeGrafter"/>
</dbReference>
<dbReference type="GO" id="GO:0019843">
    <property type="term" value="F:rRNA binding"/>
    <property type="evidence" value="ECO:0007669"/>
    <property type="project" value="UniProtKB-UniRule"/>
</dbReference>
<dbReference type="GO" id="GO:0003735">
    <property type="term" value="F:structural constituent of ribosome"/>
    <property type="evidence" value="ECO:0007669"/>
    <property type="project" value="InterPro"/>
</dbReference>
<dbReference type="GO" id="GO:0000049">
    <property type="term" value="F:tRNA binding"/>
    <property type="evidence" value="ECO:0007669"/>
    <property type="project" value="UniProtKB-KW"/>
</dbReference>
<dbReference type="GO" id="GO:0006412">
    <property type="term" value="P:translation"/>
    <property type="evidence" value="ECO:0007669"/>
    <property type="project" value="UniProtKB-UniRule"/>
</dbReference>
<dbReference type="CDD" id="cd01433">
    <property type="entry name" value="Ribosomal_L16_L10e"/>
    <property type="match status" value="1"/>
</dbReference>
<dbReference type="FunFam" id="3.90.1170.10:FF:000001">
    <property type="entry name" value="50S ribosomal protein L16"/>
    <property type="match status" value="1"/>
</dbReference>
<dbReference type="Gene3D" id="3.90.1170.10">
    <property type="entry name" value="Ribosomal protein L10e/L16"/>
    <property type="match status" value="1"/>
</dbReference>
<dbReference type="HAMAP" id="MF_01342">
    <property type="entry name" value="Ribosomal_uL16"/>
    <property type="match status" value="1"/>
</dbReference>
<dbReference type="InterPro" id="IPR047873">
    <property type="entry name" value="Ribosomal_uL16"/>
</dbReference>
<dbReference type="InterPro" id="IPR000114">
    <property type="entry name" value="Ribosomal_uL16_bact-type"/>
</dbReference>
<dbReference type="InterPro" id="IPR020798">
    <property type="entry name" value="Ribosomal_uL16_CS"/>
</dbReference>
<dbReference type="InterPro" id="IPR016180">
    <property type="entry name" value="Ribosomal_uL16_dom"/>
</dbReference>
<dbReference type="InterPro" id="IPR036920">
    <property type="entry name" value="Ribosomal_uL16_sf"/>
</dbReference>
<dbReference type="NCBIfam" id="TIGR01164">
    <property type="entry name" value="rplP_bact"/>
    <property type="match status" value="1"/>
</dbReference>
<dbReference type="PANTHER" id="PTHR12220">
    <property type="entry name" value="50S/60S RIBOSOMAL PROTEIN L16"/>
    <property type="match status" value="1"/>
</dbReference>
<dbReference type="PANTHER" id="PTHR12220:SF13">
    <property type="entry name" value="LARGE RIBOSOMAL SUBUNIT PROTEIN UL16M"/>
    <property type="match status" value="1"/>
</dbReference>
<dbReference type="Pfam" id="PF00252">
    <property type="entry name" value="Ribosomal_L16"/>
    <property type="match status" value="1"/>
</dbReference>
<dbReference type="PRINTS" id="PR00060">
    <property type="entry name" value="RIBOSOMALL16"/>
</dbReference>
<dbReference type="SUPFAM" id="SSF54686">
    <property type="entry name" value="Ribosomal protein L16p/L10e"/>
    <property type="match status" value="1"/>
</dbReference>
<dbReference type="PROSITE" id="PS00586">
    <property type="entry name" value="RIBOSOMAL_L16_1"/>
    <property type="match status" value="1"/>
</dbReference>
<dbReference type="PROSITE" id="PS00701">
    <property type="entry name" value="RIBOSOMAL_L16_2"/>
    <property type="match status" value="1"/>
</dbReference>
<feature type="chain" id="PRO_1000054579" description="Large ribosomal subunit protein uL16">
    <location>
        <begin position="1"/>
        <end position="144"/>
    </location>
</feature>
<organism>
    <name type="scientific">Bacillus velezensis (strain DSM 23117 / BGSC 10A6 / LMG 26770 / FZB42)</name>
    <name type="common">Bacillus amyloliquefaciens subsp. plantarum</name>
    <dbReference type="NCBI Taxonomy" id="326423"/>
    <lineage>
        <taxon>Bacteria</taxon>
        <taxon>Bacillati</taxon>
        <taxon>Bacillota</taxon>
        <taxon>Bacilli</taxon>
        <taxon>Bacillales</taxon>
        <taxon>Bacillaceae</taxon>
        <taxon>Bacillus</taxon>
        <taxon>Bacillus amyloliquefaciens group</taxon>
    </lineage>
</organism>
<name>RL16_BACVZ</name>
<reference key="1">
    <citation type="journal article" date="2007" name="Nat. Biotechnol.">
        <title>Comparative analysis of the complete genome sequence of the plant growth-promoting bacterium Bacillus amyloliquefaciens FZB42.</title>
        <authorList>
            <person name="Chen X.H."/>
            <person name="Koumoutsi A."/>
            <person name="Scholz R."/>
            <person name="Eisenreich A."/>
            <person name="Schneider K."/>
            <person name="Heinemeyer I."/>
            <person name="Morgenstern B."/>
            <person name="Voss B."/>
            <person name="Hess W.R."/>
            <person name="Reva O."/>
            <person name="Junge H."/>
            <person name="Voigt B."/>
            <person name="Jungblut P.R."/>
            <person name="Vater J."/>
            <person name="Suessmuth R."/>
            <person name="Liesegang H."/>
            <person name="Strittmatter A."/>
            <person name="Gottschalk G."/>
            <person name="Borriss R."/>
        </authorList>
    </citation>
    <scope>NUCLEOTIDE SEQUENCE [LARGE SCALE GENOMIC DNA]</scope>
    <source>
        <strain>DSM 23117 / BGSC 10A6 / LMG 26770 / FZB42</strain>
    </source>
</reference>
<accession>A7Z0P5</accession>
<evidence type="ECO:0000255" key="1">
    <source>
        <dbReference type="HAMAP-Rule" id="MF_01342"/>
    </source>
</evidence>
<evidence type="ECO:0000305" key="2"/>